<feature type="chain" id="PRO_0000323785" description="Uridylate kinase">
    <location>
        <begin position="1"/>
        <end position="245"/>
    </location>
</feature>
<feature type="binding site" evidence="1">
    <location>
        <begin position="20"/>
        <end position="23"/>
    </location>
    <ligand>
        <name>ATP</name>
        <dbReference type="ChEBI" id="CHEBI:30616"/>
    </ligand>
</feature>
<feature type="binding site" evidence="1">
    <location>
        <position position="60"/>
    </location>
    <ligand>
        <name>UMP</name>
        <dbReference type="ChEBI" id="CHEBI:57865"/>
    </ligand>
</feature>
<feature type="binding site" evidence="1">
    <location>
        <position position="61"/>
    </location>
    <ligand>
        <name>ATP</name>
        <dbReference type="ChEBI" id="CHEBI:30616"/>
    </ligand>
</feature>
<feature type="binding site" evidence="1">
    <location>
        <position position="65"/>
    </location>
    <ligand>
        <name>ATP</name>
        <dbReference type="ChEBI" id="CHEBI:30616"/>
    </ligand>
</feature>
<feature type="binding site" evidence="1">
    <location>
        <position position="80"/>
    </location>
    <ligand>
        <name>UMP</name>
        <dbReference type="ChEBI" id="CHEBI:57865"/>
    </ligand>
</feature>
<feature type="binding site" evidence="1">
    <location>
        <begin position="141"/>
        <end position="148"/>
    </location>
    <ligand>
        <name>UMP</name>
        <dbReference type="ChEBI" id="CHEBI:57865"/>
    </ligand>
</feature>
<feature type="binding site" evidence="1">
    <location>
        <position position="175"/>
    </location>
    <ligand>
        <name>ATP</name>
        <dbReference type="ChEBI" id="CHEBI:30616"/>
    </ligand>
</feature>
<feature type="binding site" evidence="1">
    <location>
        <position position="178"/>
    </location>
    <ligand>
        <name>ATP</name>
        <dbReference type="ChEBI" id="CHEBI:30616"/>
    </ligand>
</feature>
<proteinExistence type="inferred from homology"/>
<gene>
    <name evidence="1" type="primary">pyrH</name>
    <name type="ordered locus">AAur_1505</name>
</gene>
<comment type="function">
    <text evidence="1">Catalyzes the reversible phosphorylation of UMP to UDP.</text>
</comment>
<comment type="catalytic activity">
    <reaction evidence="1">
        <text>UMP + ATP = UDP + ADP</text>
        <dbReference type="Rhea" id="RHEA:24400"/>
        <dbReference type="ChEBI" id="CHEBI:30616"/>
        <dbReference type="ChEBI" id="CHEBI:57865"/>
        <dbReference type="ChEBI" id="CHEBI:58223"/>
        <dbReference type="ChEBI" id="CHEBI:456216"/>
        <dbReference type="EC" id="2.7.4.22"/>
    </reaction>
</comment>
<comment type="activity regulation">
    <text evidence="1">Inhibited by UTP.</text>
</comment>
<comment type="pathway">
    <text evidence="1">Pyrimidine metabolism; CTP biosynthesis via de novo pathway; UDP from UMP (UMPK route): step 1/1.</text>
</comment>
<comment type="subunit">
    <text evidence="1">Homohexamer.</text>
</comment>
<comment type="subcellular location">
    <subcellularLocation>
        <location evidence="1">Cytoplasm</location>
    </subcellularLocation>
</comment>
<comment type="similarity">
    <text evidence="1">Belongs to the UMP kinase family.</text>
</comment>
<comment type="sequence caution" evidence="2">
    <conflict type="erroneous initiation">
        <sequence resource="EMBL-CDS" id="ABM09885"/>
    </conflict>
</comment>
<name>PYRH_PAEAT</name>
<evidence type="ECO:0000255" key="1">
    <source>
        <dbReference type="HAMAP-Rule" id="MF_01220"/>
    </source>
</evidence>
<evidence type="ECO:0000305" key="2"/>
<protein>
    <recommendedName>
        <fullName evidence="1">Uridylate kinase</fullName>
        <shortName evidence="1">UK</shortName>
        <ecNumber evidence="1">2.7.4.22</ecNumber>
    </recommendedName>
    <alternativeName>
        <fullName evidence="1">Uridine monophosphate kinase</fullName>
        <shortName evidence="1">UMP kinase</shortName>
        <shortName evidence="1">UMPK</shortName>
    </alternativeName>
</protein>
<sequence>METVNTAIQPEKTRRRVLLKLSGEVIGGGKLGVDPETVRAIAKQIAAAVTEVEVAIVVGGGNFFRGAELSQSGMDRSRADYMGMLGTVMNCLALQDFLEQAGVETRVQSAITMGQVAEAYIPRRAIRHMEKGRVVIFGAGAGLPYFSTDTVAAQRALEVHADVVLMAKSGVDGVYTADPKKDPTAEKLDVLSYDDALRRDIRVMDQTAMTMCKDNSLSMVVFGMEGEGNVTRAILGETLGTLVTP</sequence>
<reference key="1">
    <citation type="journal article" date="2006" name="PLoS Genet.">
        <title>Secrets of soil survival revealed by the genome sequence of Arthrobacter aurescens TC1.</title>
        <authorList>
            <person name="Mongodin E.F."/>
            <person name="Shapir N."/>
            <person name="Daugherty S.C."/>
            <person name="DeBoy R.T."/>
            <person name="Emerson J.B."/>
            <person name="Shvartzbeyn A."/>
            <person name="Radune D."/>
            <person name="Vamathevan J."/>
            <person name="Riggs F."/>
            <person name="Grinberg V."/>
            <person name="Khouri H.M."/>
            <person name="Wackett L.P."/>
            <person name="Nelson K.E."/>
            <person name="Sadowsky M.J."/>
        </authorList>
    </citation>
    <scope>NUCLEOTIDE SEQUENCE [LARGE SCALE GENOMIC DNA]</scope>
    <source>
        <strain>TC1</strain>
    </source>
</reference>
<organism>
    <name type="scientific">Paenarthrobacter aurescens (strain TC1)</name>
    <dbReference type="NCBI Taxonomy" id="290340"/>
    <lineage>
        <taxon>Bacteria</taxon>
        <taxon>Bacillati</taxon>
        <taxon>Actinomycetota</taxon>
        <taxon>Actinomycetes</taxon>
        <taxon>Micrococcales</taxon>
        <taxon>Micrococcaceae</taxon>
        <taxon>Paenarthrobacter</taxon>
    </lineage>
</organism>
<keyword id="KW-0067">ATP-binding</keyword>
<keyword id="KW-0963">Cytoplasm</keyword>
<keyword id="KW-0418">Kinase</keyword>
<keyword id="KW-0547">Nucleotide-binding</keyword>
<keyword id="KW-0665">Pyrimidine biosynthesis</keyword>
<keyword id="KW-0808">Transferase</keyword>
<accession>A1R4W1</accession>
<dbReference type="EC" id="2.7.4.22" evidence="1"/>
<dbReference type="EMBL" id="CP000474">
    <property type="protein sequence ID" value="ABM09885.1"/>
    <property type="status" value="ALT_INIT"/>
    <property type="molecule type" value="Genomic_DNA"/>
</dbReference>
<dbReference type="RefSeq" id="WP_014921238.1">
    <property type="nucleotide sequence ID" value="NC_008711.1"/>
</dbReference>
<dbReference type="SMR" id="A1R4W1"/>
<dbReference type="STRING" id="290340.AAur_1505"/>
<dbReference type="GeneID" id="97300420"/>
<dbReference type="KEGG" id="aau:AAur_1505"/>
<dbReference type="eggNOG" id="COG0528">
    <property type="taxonomic scope" value="Bacteria"/>
</dbReference>
<dbReference type="HOGENOM" id="CLU_033861_0_0_11"/>
<dbReference type="OrthoDB" id="9807458at2"/>
<dbReference type="UniPathway" id="UPA00159">
    <property type="reaction ID" value="UER00275"/>
</dbReference>
<dbReference type="Proteomes" id="UP000000637">
    <property type="component" value="Chromosome"/>
</dbReference>
<dbReference type="GO" id="GO:0005737">
    <property type="term" value="C:cytoplasm"/>
    <property type="evidence" value="ECO:0007669"/>
    <property type="project" value="UniProtKB-SubCell"/>
</dbReference>
<dbReference type="GO" id="GO:0005524">
    <property type="term" value="F:ATP binding"/>
    <property type="evidence" value="ECO:0007669"/>
    <property type="project" value="UniProtKB-KW"/>
</dbReference>
<dbReference type="GO" id="GO:0033862">
    <property type="term" value="F:UMP kinase activity"/>
    <property type="evidence" value="ECO:0007669"/>
    <property type="project" value="UniProtKB-EC"/>
</dbReference>
<dbReference type="GO" id="GO:0044210">
    <property type="term" value="P:'de novo' CTP biosynthetic process"/>
    <property type="evidence" value="ECO:0007669"/>
    <property type="project" value="UniProtKB-UniRule"/>
</dbReference>
<dbReference type="GO" id="GO:0006225">
    <property type="term" value="P:UDP biosynthetic process"/>
    <property type="evidence" value="ECO:0007669"/>
    <property type="project" value="TreeGrafter"/>
</dbReference>
<dbReference type="CDD" id="cd04254">
    <property type="entry name" value="AAK_UMPK-PyrH-Ec"/>
    <property type="match status" value="1"/>
</dbReference>
<dbReference type="FunFam" id="3.40.1160.10:FF:000001">
    <property type="entry name" value="Uridylate kinase"/>
    <property type="match status" value="1"/>
</dbReference>
<dbReference type="Gene3D" id="3.40.1160.10">
    <property type="entry name" value="Acetylglutamate kinase-like"/>
    <property type="match status" value="1"/>
</dbReference>
<dbReference type="HAMAP" id="MF_01220_B">
    <property type="entry name" value="PyrH_B"/>
    <property type="match status" value="1"/>
</dbReference>
<dbReference type="InterPro" id="IPR036393">
    <property type="entry name" value="AceGlu_kinase-like_sf"/>
</dbReference>
<dbReference type="InterPro" id="IPR001048">
    <property type="entry name" value="Asp/Glu/Uridylate_kinase"/>
</dbReference>
<dbReference type="InterPro" id="IPR011817">
    <property type="entry name" value="Uridylate_kinase"/>
</dbReference>
<dbReference type="InterPro" id="IPR015963">
    <property type="entry name" value="Uridylate_kinase_bac"/>
</dbReference>
<dbReference type="NCBIfam" id="TIGR02075">
    <property type="entry name" value="pyrH_bact"/>
    <property type="match status" value="1"/>
</dbReference>
<dbReference type="PANTHER" id="PTHR42833">
    <property type="entry name" value="URIDYLATE KINASE"/>
    <property type="match status" value="1"/>
</dbReference>
<dbReference type="PANTHER" id="PTHR42833:SF4">
    <property type="entry name" value="URIDYLATE KINASE PUMPKIN, CHLOROPLASTIC"/>
    <property type="match status" value="1"/>
</dbReference>
<dbReference type="Pfam" id="PF00696">
    <property type="entry name" value="AA_kinase"/>
    <property type="match status" value="1"/>
</dbReference>
<dbReference type="PIRSF" id="PIRSF005650">
    <property type="entry name" value="Uridylate_kin"/>
    <property type="match status" value="1"/>
</dbReference>
<dbReference type="SUPFAM" id="SSF53633">
    <property type="entry name" value="Carbamate kinase-like"/>
    <property type="match status" value="1"/>
</dbReference>